<name>UPPP_XANC8</name>
<organism>
    <name type="scientific">Xanthomonas campestris pv. campestris (strain 8004)</name>
    <dbReference type="NCBI Taxonomy" id="314565"/>
    <lineage>
        <taxon>Bacteria</taxon>
        <taxon>Pseudomonadati</taxon>
        <taxon>Pseudomonadota</taxon>
        <taxon>Gammaproteobacteria</taxon>
        <taxon>Lysobacterales</taxon>
        <taxon>Lysobacteraceae</taxon>
        <taxon>Xanthomonas</taxon>
    </lineage>
</organism>
<accession>Q4V093</accession>
<comment type="function">
    <text evidence="1">Catalyzes the dephosphorylation of undecaprenyl diphosphate (UPP). Confers resistance to bacitracin.</text>
</comment>
<comment type="catalytic activity">
    <reaction evidence="1">
        <text>di-trans,octa-cis-undecaprenyl diphosphate + H2O = di-trans,octa-cis-undecaprenyl phosphate + phosphate + H(+)</text>
        <dbReference type="Rhea" id="RHEA:28094"/>
        <dbReference type="ChEBI" id="CHEBI:15377"/>
        <dbReference type="ChEBI" id="CHEBI:15378"/>
        <dbReference type="ChEBI" id="CHEBI:43474"/>
        <dbReference type="ChEBI" id="CHEBI:58405"/>
        <dbReference type="ChEBI" id="CHEBI:60392"/>
        <dbReference type="EC" id="3.6.1.27"/>
    </reaction>
</comment>
<comment type="subcellular location">
    <subcellularLocation>
        <location evidence="1">Cell inner membrane</location>
        <topology evidence="1">Multi-pass membrane protein</topology>
    </subcellularLocation>
</comment>
<comment type="miscellaneous">
    <text>Bacitracin is thought to be involved in the inhibition of peptidoglycan synthesis by sequestering undecaprenyl diphosphate, thereby reducing the pool of lipid carrier available.</text>
</comment>
<comment type="similarity">
    <text evidence="1">Belongs to the UppP family.</text>
</comment>
<dbReference type="EC" id="3.6.1.27" evidence="1"/>
<dbReference type="EMBL" id="CP000050">
    <property type="protein sequence ID" value="AAY47280.1"/>
    <property type="molecule type" value="Genomic_DNA"/>
</dbReference>
<dbReference type="RefSeq" id="WP_011035441.1">
    <property type="nucleotide sequence ID" value="NZ_CP155948.1"/>
</dbReference>
<dbReference type="SMR" id="Q4V093"/>
<dbReference type="KEGG" id="xcb:XC_0193"/>
<dbReference type="HOGENOM" id="CLU_060296_2_0_6"/>
<dbReference type="Proteomes" id="UP000000420">
    <property type="component" value="Chromosome"/>
</dbReference>
<dbReference type="GO" id="GO:0005886">
    <property type="term" value="C:plasma membrane"/>
    <property type="evidence" value="ECO:0007669"/>
    <property type="project" value="UniProtKB-SubCell"/>
</dbReference>
<dbReference type="GO" id="GO:0050380">
    <property type="term" value="F:undecaprenyl-diphosphatase activity"/>
    <property type="evidence" value="ECO:0007669"/>
    <property type="project" value="UniProtKB-UniRule"/>
</dbReference>
<dbReference type="GO" id="GO:0071555">
    <property type="term" value="P:cell wall organization"/>
    <property type="evidence" value="ECO:0007669"/>
    <property type="project" value="UniProtKB-KW"/>
</dbReference>
<dbReference type="GO" id="GO:0009252">
    <property type="term" value="P:peptidoglycan biosynthetic process"/>
    <property type="evidence" value="ECO:0007669"/>
    <property type="project" value="UniProtKB-KW"/>
</dbReference>
<dbReference type="GO" id="GO:0008360">
    <property type="term" value="P:regulation of cell shape"/>
    <property type="evidence" value="ECO:0007669"/>
    <property type="project" value="UniProtKB-KW"/>
</dbReference>
<dbReference type="GO" id="GO:0046677">
    <property type="term" value="P:response to antibiotic"/>
    <property type="evidence" value="ECO:0007669"/>
    <property type="project" value="UniProtKB-UniRule"/>
</dbReference>
<dbReference type="HAMAP" id="MF_01006">
    <property type="entry name" value="Undec_diphosphatase"/>
    <property type="match status" value="1"/>
</dbReference>
<dbReference type="InterPro" id="IPR003824">
    <property type="entry name" value="UppP"/>
</dbReference>
<dbReference type="NCBIfam" id="NF001390">
    <property type="entry name" value="PRK00281.1-4"/>
    <property type="match status" value="1"/>
</dbReference>
<dbReference type="PANTHER" id="PTHR30622">
    <property type="entry name" value="UNDECAPRENYL-DIPHOSPHATASE"/>
    <property type="match status" value="1"/>
</dbReference>
<dbReference type="PANTHER" id="PTHR30622:SF3">
    <property type="entry name" value="UNDECAPRENYL-DIPHOSPHATASE"/>
    <property type="match status" value="1"/>
</dbReference>
<dbReference type="Pfam" id="PF02673">
    <property type="entry name" value="BacA"/>
    <property type="match status" value="1"/>
</dbReference>
<evidence type="ECO:0000255" key="1">
    <source>
        <dbReference type="HAMAP-Rule" id="MF_01006"/>
    </source>
</evidence>
<protein>
    <recommendedName>
        <fullName evidence="1">Undecaprenyl-diphosphatase</fullName>
        <ecNumber evidence="1">3.6.1.27</ecNumber>
    </recommendedName>
    <alternativeName>
        <fullName evidence="1">Bacitracin resistance protein</fullName>
    </alternativeName>
    <alternativeName>
        <fullName evidence="1">Undecaprenyl pyrophosphate phosphatase</fullName>
    </alternativeName>
</protein>
<proteinExistence type="inferred from homology"/>
<keyword id="KW-0046">Antibiotic resistance</keyword>
<keyword id="KW-0997">Cell inner membrane</keyword>
<keyword id="KW-1003">Cell membrane</keyword>
<keyword id="KW-0133">Cell shape</keyword>
<keyword id="KW-0961">Cell wall biogenesis/degradation</keyword>
<keyword id="KW-0378">Hydrolase</keyword>
<keyword id="KW-0472">Membrane</keyword>
<keyword id="KW-0573">Peptidoglycan synthesis</keyword>
<keyword id="KW-0812">Transmembrane</keyword>
<keyword id="KW-1133">Transmembrane helix</keyword>
<feature type="chain" id="PRO_0000227647" description="Undecaprenyl-diphosphatase">
    <location>
        <begin position="1"/>
        <end position="263"/>
    </location>
</feature>
<feature type="transmembrane region" description="Helical" evidence="1">
    <location>
        <begin position="38"/>
        <end position="58"/>
    </location>
</feature>
<feature type="transmembrane region" description="Helical" evidence="1">
    <location>
        <begin position="75"/>
        <end position="95"/>
    </location>
</feature>
<feature type="transmembrane region" description="Helical" evidence="1">
    <location>
        <begin position="108"/>
        <end position="128"/>
    </location>
</feature>
<feature type="transmembrane region" description="Helical" evidence="1">
    <location>
        <begin position="135"/>
        <end position="155"/>
    </location>
</feature>
<feature type="transmembrane region" description="Helical" evidence="1">
    <location>
        <begin position="181"/>
        <end position="201"/>
    </location>
</feature>
<feature type="transmembrane region" description="Helical" evidence="1">
    <location>
        <begin position="217"/>
        <end position="237"/>
    </location>
</feature>
<feature type="transmembrane region" description="Helical" evidence="1">
    <location>
        <begin position="242"/>
        <end position="262"/>
    </location>
</feature>
<reference key="1">
    <citation type="journal article" date="2005" name="Genome Res.">
        <title>Comparative and functional genomic analyses of the pathogenicity of phytopathogen Xanthomonas campestris pv. campestris.</title>
        <authorList>
            <person name="Qian W."/>
            <person name="Jia Y."/>
            <person name="Ren S.-X."/>
            <person name="He Y.-Q."/>
            <person name="Feng J.-X."/>
            <person name="Lu L.-F."/>
            <person name="Sun Q."/>
            <person name="Ying G."/>
            <person name="Tang D.-J."/>
            <person name="Tang H."/>
            <person name="Wu W."/>
            <person name="Hao P."/>
            <person name="Wang L."/>
            <person name="Jiang B.-L."/>
            <person name="Zeng S."/>
            <person name="Gu W.-Y."/>
            <person name="Lu G."/>
            <person name="Rong L."/>
            <person name="Tian Y."/>
            <person name="Yao Z."/>
            <person name="Fu G."/>
            <person name="Chen B."/>
            <person name="Fang R."/>
            <person name="Qiang B."/>
            <person name="Chen Z."/>
            <person name="Zhao G.-P."/>
            <person name="Tang J.-L."/>
            <person name="He C."/>
        </authorList>
    </citation>
    <scope>NUCLEOTIDE SEQUENCE [LARGE SCALE GENOMIC DNA]</scope>
    <source>
        <strain>8004</strain>
    </source>
</reference>
<gene>
    <name evidence="1" type="primary">uppP</name>
    <name type="ordered locus">XC_0193</name>
</gene>
<sequence>MSDLISALLLGILEGLTEFLPISSTGHLLIAEQWLGRRSDFFNIVIQAGAILAICLALRQKLWTLATGLGERANRDYVLKIGVAFLVTAVVGLIVRKAGWQLPETIQPVAWALLIGGVWMLVAEHFAGKLPERDVVTWKVAIAVGLAQVVAGVFPGTSRSASAIFLAMLLGLSKRSAAADFVFMVGIPTMFAASGYALLEMYKEGGFGSENWTDVSVAFIAATLTGFVVVKWLLGYIKKHRFTVFAVYRILLGAALLLWLPAA</sequence>